<organism>
    <name type="scientific">Lotus japonicus</name>
    <name type="common">Lotus corniculatus var. japonicus</name>
    <dbReference type="NCBI Taxonomy" id="34305"/>
    <lineage>
        <taxon>Eukaryota</taxon>
        <taxon>Viridiplantae</taxon>
        <taxon>Streptophyta</taxon>
        <taxon>Embryophyta</taxon>
        <taxon>Tracheophyta</taxon>
        <taxon>Spermatophyta</taxon>
        <taxon>Magnoliopsida</taxon>
        <taxon>eudicotyledons</taxon>
        <taxon>Gunneridae</taxon>
        <taxon>Pentapetalae</taxon>
        <taxon>rosids</taxon>
        <taxon>fabids</taxon>
        <taxon>Fabales</taxon>
        <taxon>Fabaceae</taxon>
        <taxon>Papilionoideae</taxon>
        <taxon>50 kb inversion clade</taxon>
        <taxon>NPAAA clade</taxon>
        <taxon>Hologalegina</taxon>
        <taxon>robinioid clade</taxon>
        <taxon>Loteae</taxon>
        <taxon>Lotus</taxon>
    </lineage>
</organism>
<reference key="1">
    <citation type="journal article" date="2000" name="DNA Res.">
        <title>Complete structure of the chloroplast genome of a legume, Lotus japonicus.</title>
        <authorList>
            <person name="Kato T."/>
            <person name="Kaneko T."/>
            <person name="Sato S."/>
            <person name="Nakamura Y."/>
            <person name="Tabata S."/>
        </authorList>
    </citation>
    <scope>NUCLEOTIDE SEQUENCE [LARGE SCALE GENOMIC DNA]</scope>
    <source>
        <strain>cv. Miyakojima MG-20</strain>
    </source>
</reference>
<comment type="function">
    <text evidence="1">NDH shuttles electrons from NAD(P)H:plastoquinone, via FMN and iron-sulfur (Fe-S) centers, to quinones in the photosynthetic chain and possibly in a chloroplast respiratory chain. The immediate electron acceptor for the enzyme in this species is believed to be plastoquinone. Couples the redox reaction to proton translocation, and thus conserves the redox energy in a proton gradient (By similarity).</text>
</comment>
<comment type="catalytic activity">
    <reaction>
        <text>a plastoquinone + NADH + (n+1) H(+)(in) = a plastoquinol + NAD(+) + n H(+)(out)</text>
        <dbReference type="Rhea" id="RHEA:42608"/>
        <dbReference type="Rhea" id="RHEA-COMP:9561"/>
        <dbReference type="Rhea" id="RHEA-COMP:9562"/>
        <dbReference type="ChEBI" id="CHEBI:15378"/>
        <dbReference type="ChEBI" id="CHEBI:17757"/>
        <dbReference type="ChEBI" id="CHEBI:57540"/>
        <dbReference type="ChEBI" id="CHEBI:57945"/>
        <dbReference type="ChEBI" id="CHEBI:62192"/>
    </reaction>
</comment>
<comment type="catalytic activity">
    <reaction>
        <text>a plastoquinone + NADPH + (n+1) H(+)(in) = a plastoquinol + NADP(+) + n H(+)(out)</text>
        <dbReference type="Rhea" id="RHEA:42612"/>
        <dbReference type="Rhea" id="RHEA-COMP:9561"/>
        <dbReference type="Rhea" id="RHEA-COMP:9562"/>
        <dbReference type="ChEBI" id="CHEBI:15378"/>
        <dbReference type="ChEBI" id="CHEBI:17757"/>
        <dbReference type="ChEBI" id="CHEBI:57783"/>
        <dbReference type="ChEBI" id="CHEBI:58349"/>
        <dbReference type="ChEBI" id="CHEBI:62192"/>
    </reaction>
</comment>
<comment type="subunit">
    <text evidence="1">NDH is composed of at least 16 different subunits, 5 of which are encoded in the nucleus.</text>
</comment>
<comment type="subcellular location">
    <subcellularLocation>
        <location evidence="1">Plastid</location>
        <location evidence="1">Chloroplast thylakoid membrane</location>
        <topology evidence="1">Multi-pass membrane protein</topology>
    </subcellularLocation>
</comment>
<comment type="similarity">
    <text evidence="3">Belongs to the complex I subunit 6 family.</text>
</comment>
<feature type="chain" id="PRO_0000118354" description="NAD(P)H-quinone oxidoreductase subunit 6, chloroplastic">
    <location>
        <begin position="1"/>
        <end position="176"/>
    </location>
</feature>
<feature type="transmembrane region" description="Helical" evidence="2">
    <location>
        <begin position="10"/>
        <end position="30"/>
    </location>
</feature>
<feature type="transmembrane region" description="Helical" evidence="2">
    <location>
        <begin position="32"/>
        <end position="52"/>
    </location>
</feature>
<feature type="transmembrane region" description="Helical" evidence="2">
    <location>
        <begin position="63"/>
        <end position="83"/>
    </location>
</feature>
<feature type="transmembrane region" description="Helical" evidence="2">
    <location>
        <begin position="92"/>
        <end position="112"/>
    </location>
</feature>
<feature type="transmembrane region" description="Helical" evidence="2">
    <location>
        <begin position="152"/>
        <end position="172"/>
    </location>
</feature>
<gene>
    <name type="primary">ndhG</name>
</gene>
<name>NU6C_LOTJA</name>
<accession>Q9BBP1</accession>
<protein>
    <recommendedName>
        <fullName>NAD(P)H-quinone oxidoreductase subunit 6, chloroplastic</fullName>
        <ecNumber>7.1.1.-</ecNumber>
    </recommendedName>
    <alternativeName>
        <fullName>NAD(P)H dehydrogenase subunit 6</fullName>
    </alternativeName>
    <alternativeName>
        <fullName>NADH-plastoquinone oxidoreductase subunit 6</fullName>
    </alternativeName>
</protein>
<proteinExistence type="inferred from homology"/>
<sequence>MDLPKTLHDFLLVFLGSGLILGSLGVVLLTNPIFSAFSLGLTLVCISLLYILSNSHFVAASQLLIYVGAINVLIIFGVMFMNGSEYYQDFRLWTVGDGMTLMVCTSIFISLITTIPDTSWYGIIWTTRSNQIIEQDLISTSQQIGIHLSTDFFLPFELISIILLAALIGAIVVARQ</sequence>
<evidence type="ECO:0000250" key="1"/>
<evidence type="ECO:0000255" key="2"/>
<evidence type="ECO:0000305" key="3"/>
<keyword id="KW-0150">Chloroplast</keyword>
<keyword id="KW-0472">Membrane</keyword>
<keyword id="KW-0520">NAD</keyword>
<keyword id="KW-0521">NADP</keyword>
<keyword id="KW-0934">Plastid</keyword>
<keyword id="KW-0618">Plastoquinone</keyword>
<keyword id="KW-0874">Quinone</keyword>
<keyword id="KW-0793">Thylakoid</keyword>
<keyword id="KW-1278">Translocase</keyword>
<keyword id="KW-0812">Transmembrane</keyword>
<keyword id="KW-1133">Transmembrane helix</keyword>
<keyword id="KW-0813">Transport</keyword>
<geneLocation type="chloroplast"/>
<dbReference type="EC" id="7.1.1.-"/>
<dbReference type="EMBL" id="AP002983">
    <property type="protein sequence ID" value="BAB33248.1"/>
    <property type="molecule type" value="Genomic_DNA"/>
</dbReference>
<dbReference type="RefSeq" id="NP_084848.1">
    <property type="nucleotide sequence ID" value="NC_002694.1"/>
</dbReference>
<dbReference type="SMR" id="Q9BBP1"/>
<dbReference type="GeneID" id="802835"/>
<dbReference type="GO" id="GO:0009535">
    <property type="term" value="C:chloroplast thylakoid membrane"/>
    <property type="evidence" value="ECO:0007669"/>
    <property type="project" value="UniProtKB-SubCell"/>
</dbReference>
<dbReference type="GO" id="GO:0008137">
    <property type="term" value="F:NADH dehydrogenase (ubiquinone) activity"/>
    <property type="evidence" value="ECO:0007669"/>
    <property type="project" value="InterPro"/>
</dbReference>
<dbReference type="GO" id="GO:0048038">
    <property type="term" value="F:quinone binding"/>
    <property type="evidence" value="ECO:0007669"/>
    <property type="project" value="UniProtKB-KW"/>
</dbReference>
<dbReference type="FunFam" id="1.20.120.1200:FF:000002">
    <property type="entry name" value="NAD(P)H-quinone oxidoreductase subunit 6, chloroplastic"/>
    <property type="match status" value="1"/>
</dbReference>
<dbReference type="Gene3D" id="1.20.120.1200">
    <property type="entry name" value="NADH-ubiquinone/plastoquinone oxidoreductase chain 6, subunit NuoJ"/>
    <property type="match status" value="1"/>
</dbReference>
<dbReference type="InterPro" id="IPR050290">
    <property type="entry name" value="NAD(P)H-Q_Oxidoreduct_6"/>
</dbReference>
<dbReference type="InterPro" id="IPR001457">
    <property type="entry name" value="NADH_UbQ/plastoQ_OxRdtase_su6"/>
</dbReference>
<dbReference type="InterPro" id="IPR042106">
    <property type="entry name" value="Nuo/plastoQ_OxRdtase_6_NuoJ"/>
</dbReference>
<dbReference type="PANTHER" id="PTHR48479">
    <property type="entry name" value="NAD(P)H-QUINONE OXIDOREDUCTASE SUBUNIT 6, CHLOROPLASTIC"/>
    <property type="match status" value="1"/>
</dbReference>
<dbReference type="PANTHER" id="PTHR48479:SF1">
    <property type="entry name" value="NAD(P)H-QUINONE OXIDOREDUCTASE SUBUNIT 6, CHLOROPLASTIC"/>
    <property type="match status" value="1"/>
</dbReference>
<dbReference type="Pfam" id="PF00499">
    <property type="entry name" value="Oxidored_q3"/>
    <property type="match status" value="1"/>
</dbReference>